<sequence>MKIGIIAYQGSFEEHYLQLKRAFDKWSINGEITPVKIPKDLKDIDGVIIPGGESTTIGLVAKRLGILDELKEKITSGLPVMGTCAGAIMLAKEVSDAKVGKTSQPLIGAMNISIIRNYYGRQRESFEAIIDLSKIGKGKANVVFIRAPAITKLWGKAQSLAELNGVTVLAEENNILATTFHPELSDTTSIHEYFLHLVKG</sequence>
<dbReference type="EC" id="4.3.3.6" evidence="1"/>
<dbReference type="EC" id="3.5.1.2" evidence="1"/>
<dbReference type="EMBL" id="CP001403">
    <property type="protein sequence ID" value="ACP45824.1"/>
    <property type="molecule type" value="Genomic_DNA"/>
</dbReference>
<dbReference type="RefSeq" id="WP_012716221.1">
    <property type="nucleotide sequence ID" value="NC_012622.1"/>
</dbReference>
<dbReference type="SMR" id="C3NET5"/>
<dbReference type="GeneID" id="7808046"/>
<dbReference type="KEGG" id="siy:YG5714_1562"/>
<dbReference type="HOGENOM" id="CLU_069674_2_0_2"/>
<dbReference type="UniPathway" id="UPA00245"/>
<dbReference type="Proteomes" id="UP000002308">
    <property type="component" value="Chromosome"/>
</dbReference>
<dbReference type="GO" id="GO:0005829">
    <property type="term" value="C:cytosol"/>
    <property type="evidence" value="ECO:0007669"/>
    <property type="project" value="TreeGrafter"/>
</dbReference>
<dbReference type="GO" id="GO:1903600">
    <property type="term" value="C:glutaminase complex"/>
    <property type="evidence" value="ECO:0007669"/>
    <property type="project" value="TreeGrafter"/>
</dbReference>
<dbReference type="GO" id="GO:0004359">
    <property type="term" value="F:glutaminase activity"/>
    <property type="evidence" value="ECO:0007669"/>
    <property type="project" value="UniProtKB-UniRule"/>
</dbReference>
<dbReference type="GO" id="GO:0036381">
    <property type="term" value="F:pyridoxal 5'-phosphate synthase (glutamine hydrolysing) activity"/>
    <property type="evidence" value="ECO:0007669"/>
    <property type="project" value="UniProtKB-UniRule"/>
</dbReference>
<dbReference type="GO" id="GO:0006543">
    <property type="term" value="P:glutamine catabolic process"/>
    <property type="evidence" value="ECO:0007669"/>
    <property type="project" value="UniProtKB-UniRule"/>
</dbReference>
<dbReference type="GO" id="GO:0042823">
    <property type="term" value="P:pyridoxal phosphate biosynthetic process"/>
    <property type="evidence" value="ECO:0007669"/>
    <property type="project" value="UniProtKB-UniRule"/>
</dbReference>
<dbReference type="GO" id="GO:0008614">
    <property type="term" value="P:pyridoxine metabolic process"/>
    <property type="evidence" value="ECO:0007669"/>
    <property type="project" value="TreeGrafter"/>
</dbReference>
<dbReference type="CDD" id="cd01749">
    <property type="entry name" value="GATase1_PB"/>
    <property type="match status" value="1"/>
</dbReference>
<dbReference type="FunFam" id="3.40.50.880:FF:000041">
    <property type="entry name" value="Glutamine amidotransferase subunit pdxT, putative"/>
    <property type="match status" value="1"/>
</dbReference>
<dbReference type="Gene3D" id="3.40.50.880">
    <property type="match status" value="1"/>
</dbReference>
<dbReference type="HAMAP" id="MF_01615">
    <property type="entry name" value="PdxT"/>
    <property type="match status" value="1"/>
</dbReference>
<dbReference type="InterPro" id="IPR029062">
    <property type="entry name" value="Class_I_gatase-like"/>
</dbReference>
<dbReference type="InterPro" id="IPR002161">
    <property type="entry name" value="PdxT/SNO"/>
</dbReference>
<dbReference type="InterPro" id="IPR021196">
    <property type="entry name" value="PdxT/SNO_CS"/>
</dbReference>
<dbReference type="NCBIfam" id="TIGR03800">
    <property type="entry name" value="PLP_synth_Pdx2"/>
    <property type="match status" value="1"/>
</dbReference>
<dbReference type="PANTHER" id="PTHR31559">
    <property type="entry name" value="PYRIDOXAL 5'-PHOSPHATE SYNTHASE SUBUNIT SNO"/>
    <property type="match status" value="1"/>
</dbReference>
<dbReference type="PANTHER" id="PTHR31559:SF0">
    <property type="entry name" value="PYRIDOXAL 5'-PHOSPHATE SYNTHASE SUBUNIT SNO1-RELATED"/>
    <property type="match status" value="1"/>
</dbReference>
<dbReference type="Pfam" id="PF01174">
    <property type="entry name" value="SNO"/>
    <property type="match status" value="1"/>
</dbReference>
<dbReference type="PIRSF" id="PIRSF005639">
    <property type="entry name" value="Glut_amidoT_SNO"/>
    <property type="match status" value="1"/>
</dbReference>
<dbReference type="SUPFAM" id="SSF52317">
    <property type="entry name" value="Class I glutamine amidotransferase-like"/>
    <property type="match status" value="1"/>
</dbReference>
<dbReference type="PROSITE" id="PS01236">
    <property type="entry name" value="PDXT_SNO_1"/>
    <property type="match status" value="1"/>
</dbReference>
<dbReference type="PROSITE" id="PS51130">
    <property type="entry name" value="PDXT_SNO_2"/>
    <property type="match status" value="1"/>
</dbReference>
<feature type="chain" id="PRO_1000215726" description="Pyridoxal 5'-phosphate synthase subunit PdxT">
    <location>
        <begin position="1"/>
        <end position="200"/>
    </location>
</feature>
<feature type="active site" description="Nucleophile" evidence="1">
    <location>
        <position position="84"/>
    </location>
</feature>
<feature type="active site" description="Charge relay system" evidence="1">
    <location>
        <position position="181"/>
    </location>
</feature>
<feature type="active site" description="Charge relay system" evidence="1">
    <location>
        <position position="183"/>
    </location>
</feature>
<feature type="binding site" evidence="1">
    <location>
        <begin position="52"/>
        <end position="54"/>
    </location>
    <ligand>
        <name>L-glutamine</name>
        <dbReference type="ChEBI" id="CHEBI:58359"/>
    </ligand>
</feature>
<feature type="binding site" evidence="1">
    <location>
        <position position="116"/>
    </location>
    <ligand>
        <name>L-glutamine</name>
        <dbReference type="ChEBI" id="CHEBI:58359"/>
    </ligand>
</feature>
<feature type="binding site" evidence="1">
    <location>
        <begin position="145"/>
        <end position="146"/>
    </location>
    <ligand>
        <name>L-glutamine</name>
        <dbReference type="ChEBI" id="CHEBI:58359"/>
    </ligand>
</feature>
<protein>
    <recommendedName>
        <fullName evidence="1">Pyridoxal 5'-phosphate synthase subunit PdxT</fullName>
        <ecNumber evidence="1">4.3.3.6</ecNumber>
    </recommendedName>
    <alternativeName>
        <fullName evidence="1">Pdx2</fullName>
    </alternativeName>
    <alternativeName>
        <fullName evidence="1">Pyridoxal 5'-phosphate synthase glutaminase subunit</fullName>
        <ecNumber evidence="1">3.5.1.2</ecNumber>
    </alternativeName>
</protein>
<name>PDXT_SACI7</name>
<keyword id="KW-0315">Glutamine amidotransferase</keyword>
<keyword id="KW-0378">Hydrolase</keyword>
<keyword id="KW-0456">Lyase</keyword>
<keyword id="KW-0663">Pyridoxal phosphate</keyword>
<proteinExistence type="inferred from homology"/>
<evidence type="ECO:0000255" key="1">
    <source>
        <dbReference type="HAMAP-Rule" id="MF_01615"/>
    </source>
</evidence>
<comment type="function">
    <text evidence="1">Catalyzes the hydrolysis of glutamine to glutamate and ammonia as part of the biosynthesis of pyridoxal 5'-phosphate. The resulting ammonia molecule is channeled to the active site of PdxS.</text>
</comment>
<comment type="catalytic activity">
    <reaction evidence="1">
        <text>aldehydo-D-ribose 5-phosphate + D-glyceraldehyde 3-phosphate + L-glutamine = pyridoxal 5'-phosphate + L-glutamate + phosphate + 3 H2O + H(+)</text>
        <dbReference type="Rhea" id="RHEA:31507"/>
        <dbReference type="ChEBI" id="CHEBI:15377"/>
        <dbReference type="ChEBI" id="CHEBI:15378"/>
        <dbReference type="ChEBI" id="CHEBI:29985"/>
        <dbReference type="ChEBI" id="CHEBI:43474"/>
        <dbReference type="ChEBI" id="CHEBI:58273"/>
        <dbReference type="ChEBI" id="CHEBI:58359"/>
        <dbReference type="ChEBI" id="CHEBI:59776"/>
        <dbReference type="ChEBI" id="CHEBI:597326"/>
        <dbReference type="EC" id="4.3.3.6"/>
    </reaction>
</comment>
<comment type="catalytic activity">
    <reaction evidence="1">
        <text>L-glutamine + H2O = L-glutamate + NH4(+)</text>
        <dbReference type="Rhea" id="RHEA:15889"/>
        <dbReference type="ChEBI" id="CHEBI:15377"/>
        <dbReference type="ChEBI" id="CHEBI:28938"/>
        <dbReference type="ChEBI" id="CHEBI:29985"/>
        <dbReference type="ChEBI" id="CHEBI:58359"/>
        <dbReference type="EC" id="3.5.1.2"/>
    </reaction>
</comment>
<comment type="pathway">
    <text evidence="1">Cofactor biosynthesis; pyridoxal 5'-phosphate biosynthesis.</text>
</comment>
<comment type="subunit">
    <text evidence="1">In the presence of PdxS, forms a dodecamer of heterodimers. Only shows activity in the heterodimer.</text>
</comment>
<comment type="similarity">
    <text evidence="1">Belongs to the glutaminase PdxT/SNO family.</text>
</comment>
<accession>C3NET5</accession>
<reference key="1">
    <citation type="journal article" date="2009" name="Proc. Natl. Acad. Sci. U.S.A.">
        <title>Biogeography of the Sulfolobus islandicus pan-genome.</title>
        <authorList>
            <person name="Reno M.L."/>
            <person name="Held N.L."/>
            <person name="Fields C.J."/>
            <person name="Burke P.V."/>
            <person name="Whitaker R.J."/>
        </authorList>
    </citation>
    <scope>NUCLEOTIDE SEQUENCE [LARGE SCALE GENOMIC DNA]</scope>
    <source>
        <strain>Y.G.57.14 / Yellowstone #1</strain>
    </source>
</reference>
<organism>
    <name type="scientific">Saccharolobus islandicus (strain Y.G.57.14 / Yellowstone #1)</name>
    <name type="common">Sulfolobus islandicus</name>
    <dbReference type="NCBI Taxonomy" id="439386"/>
    <lineage>
        <taxon>Archaea</taxon>
        <taxon>Thermoproteota</taxon>
        <taxon>Thermoprotei</taxon>
        <taxon>Sulfolobales</taxon>
        <taxon>Sulfolobaceae</taxon>
        <taxon>Saccharolobus</taxon>
    </lineage>
</organism>
<gene>
    <name evidence="1" type="primary">pdxT</name>
    <name type="ordered locus">YG5714_1562</name>
</gene>